<comment type="subcellular location">
    <subcellularLocation>
        <location>Cytoplasm</location>
    </subcellularLocation>
    <subcellularLocation>
        <location evidence="1">Cell inner membrane</location>
        <topology evidence="1">Peripheral membrane protein</topology>
        <orientation evidence="1">Cytoplasmic side</orientation>
    </subcellularLocation>
</comment>
<comment type="similarity">
    <text evidence="1">Belongs to the HflD family.</text>
</comment>
<accession>A4TLN4</accession>
<gene>
    <name evidence="1" type="primary">hflD</name>
    <name type="ordered locus">YPDSF_1811</name>
</gene>
<feature type="chain" id="PRO_1000045458" description="High frequency lysogenization protein HflD homolog">
    <location>
        <begin position="1"/>
        <end position="208"/>
    </location>
</feature>
<reference key="1">
    <citation type="submission" date="2007-02" db="EMBL/GenBank/DDBJ databases">
        <title>Complete sequence of chromosome of Yersinia pestis Pestoides F.</title>
        <authorList>
            <consortium name="US DOE Joint Genome Institute"/>
            <person name="Copeland A."/>
            <person name="Lucas S."/>
            <person name="Lapidus A."/>
            <person name="Barry K."/>
            <person name="Detter J.C."/>
            <person name="Glavina del Rio T."/>
            <person name="Hammon N."/>
            <person name="Israni S."/>
            <person name="Dalin E."/>
            <person name="Tice H."/>
            <person name="Pitluck S."/>
            <person name="Di Bartolo G."/>
            <person name="Chain P."/>
            <person name="Malfatti S."/>
            <person name="Shin M."/>
            <person name="Vergez L."/>
            <person name="Schmutz J."/>
            <person name="Larimer F."/>
            <person name="Land M."/>
            <person name="Hauser L."/>
            <person name="Worsham P."/>
            <person name="Chu M."/>
            <person name="Bearden S."/>
            <person name="Garcia E."/>
            <person name="Richardson P."/>
        </authorList>
    </citation>
    <scope>NUCLEOTIDE SEQUENCE [LARGE SCALE GENOMIC DNA]</scope>
    <source>
        <strain>Pestoides F</strain>
    </source>
</reference>
<proteinExistence type="inferred from homology"/>
<sequence length="208" mass="22730">MAKNYYDITLALAGICQSARLVQQLAHEGQCDNDALNTVLRGLLQTNPSSTLAVYGDTEQVLKMGLETLQSVLNANRQGEAAELTRYTLSLMVLERKLSASKSAMNTLGERISQLDRQLAHFDLESETMMSSLASIYVDVVSPLGPRIQVTGSPAILQSPLVQAKVRATLLAGIRSAVLWQQVGGSRLQLMFSRNRLFKQAQSILAHT</sequence>
<keyword id="KW-0997">Cell inner membrane</keyword>
<keyword id="KW-1003">Cell membrane</keyword>
<keyword id="KW-0963">Cytoplasm</keyword>
<keyword id="KW-0472">Membrane</keyword>
<evidence type="ECO:0000255" key="1">
    <source>
        <dbReference type="HAMAP-Rule" id="MF_00695"/>
    </source>
</evidence>
<protein>
    <recommendedName>
        <fullName evidence="1">High frequency lysogenization protein HflD homolog</fullName>
    </recommendedName>
</protein>
<organism>
    <name type="scientific">Yersinia pestis (strain Pestoides F)</name>
    <dbReference type="NCBI Taxonomy" id="386656"/>
    <lineage>
        <taxon>Bacteria</taxon>
        <taxon>Pseudomonadati</taxon>
        <taxon>Pseudomonadota</taxon>
        <taxon>Gammaproteobacteria</taxon>
        <taxon>Enterobacterales</taxon>
        <taxon>Yersiniaceae</taxon>
        <taxon>Yersinia</taxon>
    </lineage>
</organism>
<dbReference type="EMBL" id="CP000668">
    <property type="protein sequence ID" value="ABP40196.1"/>
    <property type="molecule type" value="Genomic_DNA"/>
</dbReference>
<dbReference type="RefSeq" id="WP_002210914.1">
    <property type="nucleotide sequence ID" value="NZ_CP009715.1"/>
</dbReference>
<dbReference type="SMR" id="A4TLN4"/>
<dbReference type="GeneID" id="57976936"/>
<dbReference type="KEGG" id="ypp:YPDSF_1811"/>
<dbReference type="PATRIC" id="fig|386656.14.peg.3266"/>
<dbReference type="GO" id="GO:0005737">
    <property type="term" value="C:cytoplasm"/>
    <property type="evidence" value="ECO:0007669"/>
    <property type="project" value="UniProtKB-SubCell"/>
</dbReference>
<dbReference type="GO" id="GO:0005886">
    <property type="term" value="C:plasma membrane"/>
    <property type="evidence" value="ECO:0007669"/>
    <property type="project" value="UniProtKB-SubCell"/>
</dbReference>
<dbReference type="FunFam" id="1.10.3890.10:FF:000001">
    <property type="entry name" value="High frequency lysogenization protein HflD homolog"/>
    <property type="match status" value="1"/>
</dbReference>
<dbReference type="Gene3D" id="1.10.3890.10">
    <property type="entry name" value="HflD-like"/>
    <property type="match status" value="1"/>
</dbReference>
<dbReference type="HAMAP" id="MF_00695">
    <property type="entry name" value="HflD_protein"/>
    <property type="match status" value="1"/>
</dbReference>
<dbReference type="InterPro" id="IPR007451">
    <property type="entry name" value="HflD"/>
</dbReference>
<dbReference type="InterPro" id="IPR035932">
    <property type="entry name" value="HflD-like_sf"/>
</dbReference>
<dbReference type="NCBIfam" id="NF001246">
    <property type="entry name" value="PRK00218.1-2"/>
    <property type="match status" value="1"/>
</dbReference>
<dbReference type="NCBIfam" id="NF001248">
    <property type="entry name" value="PRK00218.1-4"/>
    <property type="match status" value="1"/>
</dbReference>
<dbReference type="NCBIfam" id="NF001249">
    <property type="entry name" value="PRK00218.1-5"/>
    <property type="match status" value="1"/>
</dbReference>
<dbReference type="PANTHER" id="PTHR38100">
    <property type="entry name" value="HIGH FREQUENCY LYSOGENIZATION PROTEIN HFLD"/>
    <property type="match status" value="1"/>
</dbReference>
<dbReference type="PANTHER" id="PTHR38100:SF1">
    <property type="entry name" value="HIGH FREQUENCY LYSOGENIZATION PROTEIN HFLD"/>
    <property type="match status" value="1"/>
</dbReference>
<dbReference type="Pfam" id="PF04356">
    <property type="entry name" value="DUF489"/>
    <property type="match status" value="1"/>
</dbReference>
<dbReference type="SUPFAM" id="SSF101322">
    <property type="entry name" value="YcfC-like"/>
    <property type="match status" value="1"/>
</dbReference>
<name>HFLD_YERPP</name>